<accession>Q96ME7</accession>
<accession>B4DSM5</accession>
<accession>Q53RZ7</accession>
<accession>Q86XK6</accession>
<accession>Q96JM0</accession>
<name>ZN512_HUMAN</name>
<gene>
    <name type="primary">ZNF512</name>
    <name type="synonym">KIAA1805</name>
</gene>
<feature type="chain" id="PRO_0000047630" description="Zinc finger protein 512">
    <location>
        <begin position="1"/>
        <end position="567"/>
    </location>
</feature>
<feature type="zinc finger region" description="C2H2-type 1" evidence="1">
    <location>
        <begin position="197"/>
        <end position="220"/>
    </location>
</feature>
<feature type="zinc finger region" description="C2H2-type 2" evidence="1">
    <location>
        <begin position="287"/>
        <end position="310"/>
    </location>
</feature>
<feature type="zinc finger region" description="C2H2-type 3; atypical" evidence="1">
    <location>
        <begin position="406"/>
        <end position="430"/>
    </location>
</feature>
<feature type="zinc finger region" description="C2H2-type 4" evidence="1">
    <location>
        <begin position="440"/>
        <end position="463"/>
    </location>
</feature>
<feature type="region of interest" description="Disordered" evidence="2">
    <location>
        <begin position="1"/>
        <end position="32"/>
    </location>
</feature>
<feature type="region of interest" description="Disordered" evidence="2">
    <location>
        <begin position="86"/>
        <end position="148"/>
    </location>
</feature>
<feature type="region of interest" description="Disordered" evidence="2">
    <location>
        <begin position="486"/>
        <end position="567"/>
    </location>
</feature>
<feature type="compositionally biased region" description="Polar residues" evidence="2">
    <location>
        <begin position="12"/>
        <end position="23"/>
    </location>
</feature>
<feature type="compositionally biased region" description="Basic residues" evidence="2">
    <location>
        <begin position="119"/>
        <end position="130"/>
    </location>
</feature>
<feature type="compositionally biased region" description="Basic residues" evidence="2">
    <location>
        <begin position="495"/>
        <end position="508"/>
    </location>
</feature>
<feature type="compositionally biased region" description="Basic and acidic residues" evidence="2">
    <location>
        <begin position="523"/>
        <end position="532"/>
    </location>
</feature>
<feature type="compositionally biased region" description="Basic residues" evidence="2">
    <location>
        <begin position="556"/>
        <end position="567"/>
    </location>
</feature>
<feature type="cross-link" description="Glycyl lysine isopeptide (Lys-Gly) (interchain with G-Cter in SUMO2)" evidence="7">
    <location>
        <position position="18"/>
    </location>
</feature>
<feature type="cross-link" description="Glycyl lysine isopeptide (Lys-Gly) (interchain with G-Cter in SUMO2)" evidence="7">
    <location>
        <position position="84"/>
    </location>
</feature>
<feature type="cross-link" description="Glycyl lysine isopeptide (Lys-Gly) (interchain with G-Cter in SUMO2)" evidence="7">
    <location>
        <position position="227"/>
    </location>
</feature>
<feature type="cross-link" description="Glycyl lysine isopeptide (Lys-Gly) (interchain with G-Cter in SUMO2)" evidence="6">
    <location>
        <position position="333"/>
    </location>
</feature>
<feature type="splice variant" id="VSP_046933" description="In isoform 2." evidence="3 4">
    <location>
        <begin position="1"/>
        <end position="77"/>
    </location>
</feature>
<feature type="splice variant" id="VSP_046934" description="In isoform 3." evidence="5">
    <location>
        <position position="31"/>
    </location>
</feature>
<feature type="splice variant" id="VSP_046935" description="In isoform 3." evidence="5">
    <location>
        <begin position="126"/>
        <end position="153"/>
    </location>
</feature>
<feature type="sequence conflict" description="In Ref. 1; BAB71348." evidence="5" ref="1">
    <original>R</original>
    <variation>S</variation>
    <location>
        <position position="24"/>
    </location>
</feature>
<feature type="helix" evidence="8">
    <location>
        <begin position="155"/>
        <end position="165"/>
    </location>
</feature>
<feature type="turn" evidence="8">
    <location>
        <begin position="172"/>
        <end position="174"/>
    </location>
</feature>
<feature type="strand" evidence="8">
    <location>
        <begin position="178"/>
        <end position="181"/>
    </location>
</feature>
<feature type="helix" evidence="8">
    <location>
        <begin position="182"/>
        <end position="192"/>
    </location>
</feature>
<feature type="strand" evidence="8">
    <location>
        <begin position="200"/>
        <end position="202"/>
    </location>
</feature>
<feature type="helix" evidence="8">
    <location>
        <begin position="209"/>
        <end position="219"/>
    </location>
</feature>
<organism>
    <name type="scientific">Homo sapiens</name>
    <name type="common">Human</name>
    <dbReference type="NCBI Taxonomy" id="9606"/>
    <lineage>
        <taxon>Eukaryota</taxon>
        <taxon>Metazoa</taxon>
        <taxon>Chordata</taxon>
        <taxon>Craniata</taxon>
        <taxon>Vertebrata</taxon>
        <taxon>Euteleostomi</taxon>
        <taxon>Mammalia</taxon>
        <taxon>Eutheria</taxon>
        <taxon>Euarchontoglires</taxon>
        <taxon>Primates</taxon>
        <taxon>Haplorrhini</taxon>
        <taxon>Catarrhini</taxon>
        <taxon>Hominidae</taxon>
        <taxon>Homo</taxon>
    </lineage>
</organism>
<keyword id="KW-0002">3D-structure</keyword>
<keyword id="KW-0025">Alternative splicing</keyword>
<keyword id="KW-0238">DNA-binding</keyword>
<keyword id="KW-1017">Isopeptide bond</keyword>
<keyword id="KW-0479">Metal-binding</keyword>
<keyword id="KW-0539">Nucleus</keyword>
<keyword id="KW-1267">Proteomics identification</keyword>
<keyword id="KW-1185">Reference proteome</keyword>
<keyword id="KW-0677">Repeat</keyword>
<keyword id="KW-0804">Transcription</keyword>
<keyword id="KW-0805">Transcription regulation</keyword>
<keyword id="KW-0832">Ubl conjugation</keyword>
<keyword id="KW-0862">Zinc</keyword>
<keyword id="KW-0863">Zinc-finger</keyword>
<reference key="1">
    <citation type="journal article" date="2004" name="Nat. Genet.">
        <title>Complete sequencing and characterization of 21,243 full-length human cDNAs.</title>
        <authorList>
            <person name="Ota T."/>
            <person name="Suzuki Y."/>
            <person name="Nishikawa T."/>
            <person name="Otsuki T."/>
            <person name="Sugiyama T."/>
            <person name="Irie R."/>
            <person name="Wakamatsu A."/>
            <person name="Hayashi K."/>
            <person name="Sato H."/>
            <person name="Nagai K."/>
            <person name="Kimura K."/>
            <person name="Makita H."/>
            <person name="Sekine M."/>
            <person name="Obayashi M."/>
            <person name="Nishi T."/>
            <person name="Shibahara T."/>
            <person name="Tanaka T."/>
            <person name="Ishii S."/>
            <person name="Yamamoto J."/>
            <person name="Saito K."/>
            <person name="Kawai Y."/>
            <person name="Isono Y."/>
            <person name="Nakamura Y."/>
            <person name="Nagahari K."/>
            <person name="Murakami K."/>
            <person name="Yasuda T."/>
            <person name="Iwayanagi T."/>
            <person name="Wagatsuma M."/>
            <person name="Shiratori A."/>
            <person name="Sudo H."/>
            <person name="Hosoiri T."/>
            <person name="Kaku Y."/>
            <person name="Kodaira H."/>
            <person name="Kondo H."/>
            <person name="Sugawara M."/>
            <person name="Takahashi M."/>
            <person name="Kanda K."/>
            <person name="Yokoi T."/>
            <person name="Furuya T."/>
            <person name="Kikkawa E."/>
            <person name="Omura Y."/>
            <person name="Abe K."/>
            <person name="Kamihara K."/>
            <person name="Katsuta N."/>
            <person name="Sato K."/>
            <person name="Tanikawa M."/>
            <person name="Yamazaki M."/>
            <person name="Ninomiya K."/>
            <person name="Ishibashi T."/>
            <person name="Yamashita H."/>
            <person name="Murakawa K."/>
            <person name="Fujimori K."/>
            <person name="Tanai H."/>
            <person name="Kimata M."/>
            <person name="Watanabe M."/>
            <person name="Hiraoka S."/>
            <person name="Chiba Y."/>
            <person name="Ishida S."/>
            <person name="Ono Y."/>
            <person name="Takiguchi S."/>
            <person name="Watanabe S."/>
            <person name="Yosida M."/>
            <person name="Hotuta T."/>
            <person name="Kusano J."/>
            <person name="Kanehori K."/>
            <person name="Takahashi-Fujii A."/>
            <person name="Hara H."/>
            <person name="Tanase T.-O."/>
            <person name="Nomura Y."/>
            <person name="Togiya S."/>
            <person name="Komai F."/>
            <person name="Hara R."/>
            <person name="Takeuchi K."/>
            <person name="Arita M."/>
            <person name="Imose N."/>
            <person name="Musashino K."/>
            <person name="Yuuki H."/>
            <person name="Oshima A."/>
            <person name="Sasaki N."/>
            <person name="Aotsuka S."/>
            <person name="Yoshikawa Y."/>
            <person name="Matsunawa H."/>
            <person name="Ichihara T."/>
            <person name="Shiohata N."/>
            <person name="Sano S."/>
            <person name="Moriya S."/>
            <person name="Momiyama H."/>
            <person name="Satoh N."/>
            <person name="Takami S."/>
            <person name="Terashima Y."/>
            <person name="Suzuki O."/>
            <person name="Nakagawa S."/>
            <person name="Senoh A."/>
            <person name="Mizoguchi H."/>
            <person name="Goto Y."/>
            <person name="Shimizu F."/>
            <person name="Wakebe H."/>
            <person name="Hishigaki H."/>
            <person name="Watanabe T."/>
            <person name="Sugiyama A."/>
            <person name="Takemoto M."/>
            <person name="Kawakami B."/>
            <person name="Yamazaki M."/>
            <person name="Watanabe K."/>
            <person name="Kumagai A."/>
            <person name="Itakura S."/>
            <person name="Fukuzumi Y."/>
            <person name="Fujimori Y."/>
            <person name="Komiyama M."/>
            <person name="Tashiro H."/>
            <person name="Tanigami A."/>
            <person name="Fujiwara T."/>
            <person name="Ono T."/>
            <person name="Yamada K."/>
            <person name="Fujii Y."/>
            <person name="Ozaki K."/>
            <person name="Hirao M."/>
            <person name="Ohmori Y."/>
            <person name="Kawabata A."/>
            <person name="Hikiji T."/>
            <person name="Kobatake N."/>
            <person name="Inagaki H."/>
            <person name="Ikema Y."/>
            <person name="Okamoto S."/>
            <person name="Okitani R."/>
            <person name="Kawakami T."/>
            <person name="Noguchi S."/>
            <person name="Itoh T."/>
            <person name="Shigeta K."/>
            <person name="Senba T."/>
            <person name="Matsumura K."/>
            <person name="Nakajima Y."/>
            <person name="Mizuno T."/>
            <person name="Morinaga M."/>
            <person name="Sasaki M."/>
            <person name="Togashi T."/>
            <person name="Oyama M."/>
            <person name="Hata H."/>
            <person name="Watanabe M."/>
            <person name="Komatsu T."/>
            <person name="Mizushima-Sugano J."/>
            <person name="Satoh T."/>
            <person name="Shirai Y."/>
            <person name="Takahashi Y."/>
            <person name="Nakagawa K."/>
            <person name="Okumura K."/>
            <person name="Nagase T."/>
            <person name="Nomura N."/>
            <person name="Kikuchi H."/>
            <person name="Masuho Y."/>
            <person name="Yamashita R."/>
            <person name="Nakai K."/>
            <person name="Yada T."/>
            <person name="Nakamura Y."/>
            <person name="Ohara O."/>
            <person name="Isogai T."/>
            <person name="Sugano S."/>
        </authorList>
    </citation>
    <scope>NUCLEOTIDE SEQUENCE [LARGE SCALE MRNA] (ISOFORMS 1 AND 2)</scope>
    <source>
        <tissue>Brain</tissue>
        <tissue>Cerebellum</tissue>
        <tissue>Neuroepithelioma</tissue>
    </source>
</reference>
<reference key="2">
    <citation type="journal article" date="2005" name="Nature">
        <title>Generation and annotation of the DNA sequences of human chromosomes 2 and 4.</title>
        <authorList>
            <person name="Hillier L.W."/>
            <person name="Graves T.A."/>
            <person name="Fulton R.S."/>
            <person name="Fulton L.A."/>
            <person name="Pepin K.H."/>
            <person name="Minx P."/>
            <person name="Wagner-McPherson C."/>
            <person name="Layman D."/>
            <person name="Wylie K."/>
            <person name="Sekhon M."/>
            <person name="Becker M.C."/>
            <person name="Fewell G.A."/>
            <person name="Delehaunty K.D."/>
            <person name="Miner T.L."/>
            <person name="Nash W.E."/>
            <person name="Kremitzki C."/>
            <person name="Oddy L."/>
            <person name="Du H."/>
            <person name="Sun H."/>
            <person name="Bradshaw-Cordum H."/>
            <person name="Ali J."/>
            <person name="Carter J."/>
            <person name="Cordes M."/>
            <person name="Harris A."/>
            <person name="Isak A."/>
            <person name="van Brunt A."/>
            <person name="Nguyen C."/>
            <person name="Du F."/>
            <person name="Courtney L."/>
            <person name="Kalicki J."/>
            <person name="Ozersky P."/>
            <person name="Abbott S."/>
            <person name="Armstrong J."/>
            <person name="Belter E.A."/>
            <person name="Caruso L."/>
            <person name="Cedroni M."/>
            <person name="Cotton M."/>
            <person name="Davidson T."/>
            <person name="Desai A."/>
            <person name="Elliott G."/>
            <person name="Erb T."/>
            <person name="Fronick C."/>
            <person name="Gaige T."/>
            <person name="Haakenson W."/>
            <person name="Haglund K."/>
            <person name="Holmes A."/>
            <person name="Harkins R."/>
            <person name="Kim K."/>
            <person name="Kruchowski S.S."/>
            <person name="Strong C.M."/>
            <person name="Grewal N."/>
            <person name="Goyea E."/>
            <person name="Hou S."/>
            <person name="Levy A."/>
            <person name="Martinka S."/>
            <person name="Mead K."/>
            <person name="McLellan M.D."/>
            <person name="Meyer R."/>
            <person name="Randall-Maher J."/>
            <person name="Tomlinson C."/>
            <person name="Dauphin-Kohlberg S."/>
            <person name="Kozlowicz-Reilly A."/>
            <person name="Shah N."/>
            <person name="Swearengen-Shahid S."/>
            <person name="Snider J."/>
            <person name="Strong J.T."/>
            <person name="Thompson J."/>
            <person name="Yoakum M."/>
            <person name="Leonard S."/>
            <person name="Pearman C."/>
            <person name="Trani L."/>
            <person name="Radionenko M."/>
            <person name="Waligorski J.E."/>
            <person name="Wang C."/>
            <person name="Rock S.M."/>
            <person name="Tin-Wollam A.-M."/>
            <person name="Maupin R."/>
            <person name="Latreille P."/>
            <person name="Wendl M.C."/>
            <person name="Yang S.-P."/>
            <person name="Pohl C."/>
            <person name="Wallis J.W."/>
            <person name="Spieth J."/>
            <person name="Bieri T.A."/>
            <person name="Berkowicz N."/>
            <person name="Nelson J.O."/>
            <person name="Osborne J."/>
            <person name="Ding L."/>
            <person name="Meyer R."/>
            <person name="Sabo A."/>
            <person name="Shotland Y."/>
            <person name="Sinha P."/>
            <person name="Wohldmann P.E."/>
            <person name="Cook L.L."/>
            <person name="Hickenbotham M.T."/>
            <person name="Eldred J."/>
            <person name="Williams D."/>
            <person name="Jones T.A."/>
            <person name="She X."/>
            <person name="Ciccarelli F.D."/>
            <person name="Izaurralde E."/>
            <person name="Taylor J."/>
            <person name="Schmutz J."/>
            <person name="Myers R.M."/>
            <person name="Cox D.R."/>
            <person name="Huang X."/>
            <person name="McPherson J.D."/>
            <person name="Mardis E.R."/>
            <person name="Clifton S.W."/>
            <person name="Warren W.C."/>
            <person name="Chinwalla A.T."/>
            <person name="Eddy S.R."/>
            <person name="Marra M.A."/>
            <person name="Ovcharenko I."/>
            <person name="Furey T.S."/>
            <person name="Miller W."/>
            <person name="Eichler E.E."/>
            <person name="Bork P."/>
            <person name="Suyama M."/>
            <person name="Torrents D."/>
            <person name="Waterston R.H."/>
            <person name="Wilson R.K."/>
        </authorList>
    </citation>
    <scope>NUCLEOTIDE SEQUENCE [LARGE SCALE GENOMIC DNA]</scope>
</reference>
<reference key="3">
    <citation type="submission" date="2005-09" db="EMBL/GenBank/DDBJ databases">
        <authorList>
            <person name="Mural R.J."/>
            <person name="Istrail S."/>
            <person name="Sutton G.G."/>
            <person name="Florea L."/>
            <person name="Halpern A.L."/>
            <person name="Mobarry C.M."/>
            <person name="Lippert R."/>
            <person name="Walenz B."/>
            <person name="Shatkay H."/>
            <person name="Dew I."/>
            <person name="Miller J.R."/>
            <person name="Flanigan M.J."/>
            <person name="Edwards N.J."/>
            <person name="Bolanos R."/>
            <person name="Fasulo D."/>
            <person name="Halldorsson B.V."/>
            <person name="Hannenhalli S."/>
            <person name="Turner R."/>
            <person name="Yooseph S."/>
            <person name="Lu F."/>
            <person name="Nusskern D.R."/>
            <person name="Shue B.C."/>
            <person name="Zheng X.H."/>
            <person name="Zhong F."/>
            <person name="Delcher A.L."/>
            <person name="Huson D.H."/>
            <person name="Kravitz S.A."/>
            <person name="Mouchard L."/>
            <person name="Reinert K."/>
            <person name="Remington K.A."/>
            <person name="Clark A.G."/>
            <person name="Waterman M.S."/>
            <person name="Eichler E.E."/>
            <person name="Adams M.D."/>
            <person name="Hunkapiller M.W."/>
            <person name="Myers E.W."/>
            <person name="Venter J.C."/>
        </authorList>
    </citation>
    <scope>NUCLEOTIDE SEQUENCE [LARGE SCALE GENOMIC DNA]</scope>
</reference>
<reference key="4">
    <citation type="journal article" date="2004" name="Genome Res.">
        <title>The status, quality, and expansion of the NIH full-length cDNA project: the Mammalian Gene Collection (MGC).</title>
        <authorList>
            <consortium name="The MGC Project Team"/>
        </authorList>
    </citation>
    <scope>NUCLEOTIDE SEQUENCE [LARGE SCALE MRNA] (ISOFORM 2)</scope>
    <source>
        <tissue>Testis</tissue>
        <tissue>Uterus</tissue>
    </source>
</reference>
<reference key="5">
    <citation type="journal article" date="2001" name="DNA Res.">
        <title>Prediction of the coding sequences of unidentified human genes. XX. The complete sequences of 100 new cDNA clones from brain which code for large proteins in vitro.</title>
        <authorList>
            <person name="Nagase T."/>
            <person name="Nakayama M."/>
            <person name="Nakajima D."/>
            <person name="Kikuno R."/>
            <person name="Ohara O."/>
        </authorList>
    </citation>
    <scope>NUCLEOTIDE SEQUENCE [LARGE SCALE MRNA] OF 34-567 (ISOFORM 1)</scope>
    <source>
        <tissue>Brain</tissue>
    </source>
</reference>
<reference key="6">
    <citation type="journal article" date="2014" name="Nat. Struct. Mol. Biol.">
        <title>Uncovering global SUMOylation signaling networks in a site-specific manner.</title>
        <authorList>
            <person name="Hendriks I.A."/>
            <person name="D'Souza R.C."/>
            <person name="Yang B."/>
            <person name="Verlaan-de Vries M."/>
            <person name="Mann M."/>
            <person name="Vertegaal A.C."/>
        </authorList>
    </citation>
    <scope>SUMOYLATION [LARGE SCALE ANALYSIS] AT LYS-333</scope>
    <scope>IDENTIFICATION BY MASS SPECTROMETRY [LARGE SCALE ANALYSIS]</scope>
</reference>
<reference key="7">
    <citation type="journal article" date="2017" name="Nat. Struct. Mol. Biol.">
        <title>Site-specific mapping of the human SUMO proteome reveals co-modification with phosphorylation.</title>
        <authorList>
            <person name="Hendriks I.A."/>
            <person name="Lyon D."/>
            <person name="Young C."/>
            <person name="Jensen L.J."/>
            <person name="Vertegaal A.C."/>
            <person name="Nielsen M.L."/>
        </authorList>
    </citation>
    <scope>SUMOYLATION [LARGE SCALE ANALYSIS] AT LYS-18; LYS-84 AND LYS-227</scope>
    <scope>IDENTIFICATION BY MASS SPECTROMETRY [LARGE SCALE ANALYSIS]</scope>
</reference>
<reference key="8">
    <citation type="submission" date="2005-11" db="PDB data bank">
        <title>Solution structure of two ZF-C2H2 domains from human zinc finger protein 512.</title>
        <authorList>
            <consortium name="RIKEN structural genomics initiative (RSGI)"/>
        </authorList>
    </citation>
    <scope>STRUCTURE BY NMR OF 142-224</scope>
</reference>
<evidence type="ECO:0000255" key="1">
    <source>
        <dbReference type="PROSITE-ProRule" id="PRU00042"/>
    </source>
</evidence>
<evidence type="ECO:0000256" key="2">
    <source>
        <dbReference type="SAM" id="MobiDB-lite"/>
    </source>
</evidence>
<evidence type="ECO:0000303" key="3">
    <source>
    </source>
</evidence>
<evidence type="ECO:0000303" key="4">
    <source>
    </source>
</evidence>
<evidence type="ECO:0000305" key="5"/>
<evidence type="ECO:0007744" key="6">
    <source>
    </source>
</evidence>
<evidence type="ECO:0007744" key="7">
    <source>
    </source>
</evidence>
<evidence type="ECO:0007829" key="8">
    <source>
        <dbReference type="PDB" id="2CTD"/>
    </source>
</evidence>
<protein>
    <recommendedName>
        <fullName>Zinc finger protein 512</fullName>
    </recommendedName>
</protein>
<proteinExistence type="evidence at protein level"/>
<sequence>MSSRLGAVPATSGPTTFKQQRSTRIVGAKNSRTQCSIKDNSFQYTIPHDDSLSGSSSASSCEPVSDFPASFRKSTYWMKMRRIKPAATSHVEGSGGVSAKGKRKPRQEEDEDYREFPQKKHKLYGRKQRPKTQPNPKSQARRIRKEPPVYAAGSLEEQWYLEIVDKGSVSCPTCQAVGRKTIEGLKKHMENCKQEMFTCHHCGKQLRSLAGMKYHVMANHNSLPILKAGDEIDEPSERERLRTVLKRLGKLRCMRESCSSSFTSIMGYLYHVRKCGKGAAELEKMTLKCHHCGKPYRSKAGLAYHLRSEHGPISFFPESGQPECLKEMNLESKSGGRVQRRSAKIAVYHLQELASAELAKEWPKRKVLQDLVPDDRKLKYTRPGLPTFSQEVLHKWKTDIKKYHRIQCPNQGCEAVYSSVSGLKAHLGSCTLGNFVAGKYKCLLCQKEFVSESGVKYHINSVHAEDWFVVNPTTTKSFEKLMKIKQRQQEEEKRRQQHRSRRSLRRRQQPGIELPETELSLRVGKDQRRNNEELVVSASCKEPEQEPVPAQFQKVKPPKTNHKRGRK</sequence>
<comment type="function">
    <text>May be involved in transcriptional regulation.</text>
</comment>
<comment type="interaction">
    <interactant intactId="EBI-10986895">
        <id>Q96ME7</id>
    </interactant>
    <interactant intactId="EBI-2556193">
        <id>Q63ZY3</id>
        <label>KANK2</label>
    </interactant>
    <organismsDiffer>false</organismsDiffer>
    <experiments>3</experiments>
</comment>
<comment type="subcellular location">
    <subcellularLocation>
        <location evidence="5">Nucleus</location>
    </subcellularLocation>
</comment>
<comment type="alternative products">
    <event type="alternative splicing"/>
    <isoform>
        <id>Q96ME7-1</id>
        <name>1</name>
        <sequence type="displayed"/>
    </isoform>
    <isoform>
        <id>Q96ME7-2</id>
        <name>2</name>
        <sequence type="described" ref="VSP_046933"/>
    </isoform>
    <isoform>
        <id>Q96ME7-3</id>
        <name>3</name>
        <sequence type="described" ref="VSP_046934 VSP_046935"/>
    </isoform>
</comment>
<comment type="similarity">
    <text evidence="5">Belongs to the krueppel C2H2-type zinc-finger protein family.</text>
</comment>
<dbReference type="EMBL" id="AK057028">
    <property type="protein sequence ID" value="BAB71348.1"/>
    <property type="molecule type" value="mRNA"/>
</dbReference>
<dbReference type="EMBL" id="AK294055">
    <property type="protein sequence ID" value="BAH11661.1"/>
    <property type="molecule type" value="mRNA"/>
</dbReference>
<dbReference type="EMBL" id="AK299818">
    <property type="protein sequence ID" value="BAG61687.1"/>
    <property type="molecule type" value="mRNA"/>
</dbReference>
<dbReference type="EMBL" id="AK316299">
    <property type="protein sequence ID" value="BAH14670.1"/>
    <property type="molecule type" value="mRNA"/>
</dbReference>
<dbReference type="EMBL" id="AC074091">
    <property type="protein sequence ID" value="AAX93199.1"/>
    <property type="molecule type" value="Genomic_DNA"/>
</dbReference>
<dbReference type="EMBL" id="CH471053">
    <property type="protein sequence ID" value="EAX00562.1"/>
    <property type="molecule type" value="Genomic_DNA"/>
</dbReference>
<dbReference type="EMBL" id="CH471053">
    <property type="protein sequence ID" value="EAX00564.1"/>
    <property type="molecule type" value="Genomic_DNA"/>
</dbReference>
<dbReference type="EMBL" id="CH471053">
    <property type="protein sequence ID" value="EAX00565.1"/>
    <property type="molecule type" value="Genomic_DNA"/>
</dbReference>
<dbReference type="EMBL" id="AB058708">
    <property type="protein sequence ID" value="BAB47434.1"/>
    <property type="molecule type" value="mRNA"/>
</dbReference>
<dbReference type="EMBL" id="BC043221">
    <property type="protein sequence ID" value="AAH43221.1"/>
    <property type="molecule type" value="mRNA"/>
</dbReference>
<dbReference type="EMBL" id="BC093041">
    <property type="protein sequence ID" value="AAH93041.1"/>
    <property type="molecule type" value="mRNA"/>
</dbReference>
<dbReference type="CCDS" id="CCDS1758.1">
    <molecule id="Q96ME7-1"/>
</dbReference>
<dbReference type="CCDS" id="CCDS59428.1">
    <molecule id="Q96ME7-3"/>
</dbReference>
<dbReference type="CCDS" id="CCDS59429.1">
    <molecule id="Q96ME7-2"/>
</dbReference>
<dbReference type="RefSeq" id="NP_001258215.1">
    <molecule id="Q96ME7-3"/>
    <property type="nucleotide sequence ID" value="NM_001271286.2"/>
</dbReference>
<dbReference type="RefSeq" id="NP_001258216.1">
    <molecule id="Q96ME7-2"/>
    <property type="nucleotide sequence ID" value="NM_001271287.2"/>
</dbReference>
<dbReference type="RefSeq" id="NP_001258217.1">
    <molecule id="Q96ME7-2"/>
    <property type="nucleotide sequence ID" value="NM_001271288.2"/>
</dbReference>
<dbReference type="RefSeq" id="NP_001258218.1">
    <property type="nucleotide sequence ID" value="NM_001271289.1"/>
</dbReference>
<dbReference type="RefSeq" id="NP_001258247.1">
    <molecule id="Q96ME7-2"/>
    <property type="nucleotide sequence ID" value="NM_001271318.2"/>
</dbReference>
<dbReference type="RefSeq" id="NP_115810.2">
    <molecule id="Q96ME7-1"/>
    <property type="nucleotide sequence ID" value="NM_032434.3"/>
</dbReference>
<dbReference type="PDB" id="2CTD">
    <property type="method" value="NMR"/>
    <property type="chains" value="A=142-224"/>
</dbReference>
<dbReference type="PDBsum" id="2CTD"/>
<dbReference type="SMR" id="Q96ME7"/>
<dbReference type="BioGRID" id="124088">
    <property type="interactions" value="284"/>
</dbReference>
<dbReference type="FunCoup" id="Q96ME7">
    <property type="interactions" value="2725"/>
</dbReference>
<dbReference type="IntAct" id="Q96ME7">
    <property type="interactions" value="208"/>
</dbReference>
<dbReference type="MINT" id="Q96ME7"/>
<dbReference type="STRING" id="9606.ENSP00000347648"/>
<dbReference type="GlyCosmos" id="Q96ME7">
    <property type="glycosylation" value="1 site, 1 glycan"/>
</dbReference>
<dbReference type="GlyGen" id="Q96ME7">
    <property type="glycosylation" value="2 sites, 1 O-linked glycan (2 sites)"/>
</dbReference>
<dbReference type="iPTMnet" id="Q96ME7"/>
<dbReference type="PhosphoSitePlus" id="Q96ME7"/>
<dbReference type="SwissPalm" id="Q96ME7"/>
<dbReference type="BioMuta" id="ZNF512"/>
<dbReference type="DMDM" id="229462786"/>
<dbReference type="jPOST" id="Q96ME7"/>
<dbReference type="MassIVE" id="Q96ME7"/>
<dbReference type="PaxDb" id="9606-ENSP00000347648"/>
<dbReference type="PeptideAtlas" id="Q96ME7"/>
<dbReference type="ProteomicsDB" id="5037"/>
<dbReference type="ProteomicsDB" id="70294"/>
<dbReference type="ProteomicsDB" id="77343">
    <molecule id="Q96ME7-1"/>
</dbReference>
<dbReference type="Pumba" id="Q96ME7"/>
<dbReference type="Antibodypedia" id="34858">
    <property type="antibodies" value="94 antibodies from 20 providers"/>
</dbReference>
<dbReference type="DNASU" id="84450"/>
<dbReference type="Ensembl" id="ENST00000355467.6">
    <molecule id="Q96ME7-1"/>
    <property type="protein sequence ID" value="ENSP00000347648.3"/>
    <property type="gene ID" value="ENSG00000243943.10"/>
</dbReference>
<dbReference type="Ensembl" id="ENST00000413371.6">
    <molecule id="Q96ME7-2"/>
    <property type="protein sequence ID" value="ENSP00000395660.2"/>
    <property type="gene ID" value="ENSG00000243943.10"/>
</dbReference>
<dbReference type="Ensembl" id="ENST00000416005.6">
    <molecule id="Q96ME7-3"/>
    <property type="protein sequence ID" value="ENSP00000407038.2"/>
    <property type="gene ID" value="ENSG00000243943.10"/>
</dbReference>
<dbReference type="Ensembl" id="ENST00000556601.5">
    <molecule id="Q96ME7-2"/>
    <property type="protein sequence ID" value="ENSP00000451572.2"/>
    <property type="gene ID" value="ENSG00000243943.10"/>
</dbReference>
<dbReference type="GeneID" id="84450"/>
<dbReference type="KEGG" id="hsa:84450"/>
<dbReference type="MANE-Select" id="ENST00000355467.6">
    <property type="protein sequence ID" value="ENSP00000347648.3"/>
    <property type="RefSeq nucleotide sequence ID" value="NM_032434.4"/>
    <property type="RefSeq protein sequence ID" value="NP_115810.2"/>
</dbReference>
<dbReference type="UCSC" id="uc002rla.5">
    <molecule id="Q96ME7-1"/>
    <property type="organism name" value="human"/>
</dbReference>
<dbReference type="AGR" id="HGNC:29380"/>
<dbReference type="CTD" id="84450"/>
<dbReference type="DisGeNET" id="84450"/>
<dbReference type="GeneCards" id="ZNF512"/>
<dbReference type="HGNC" id="HGNC:29380">
    <property type="gene designation" value="ZNF512"/>
</dbReference>
<dbReference type="HPA" id="ENSG00000243943">
    <property type="expression patterns" value="Low tissue specificity"/>
</dbReference>
<dbReference type="MIM" id="620921">
    <property type="type" value="gene"/>
</dbReference>
<dbReference type="neXtProt" id="NX_Q96ME7"/>
<dbReference type="OpenTargets" id="ENSG00000243943"/>
<dbReference type="PharmGKB" id="PA134896861"/>
<dbReference type="VEuPathDB" id="HostDB:ENSG00000243943"/>
<dbReference type="eggNOG" id="KOG1721">
    <property type="taxonomic scope" value="Eukaryota"/>
</dbReference>
<dbReference type="GeneTree" id="ENSGT00940000158595"/>
<dbReference type="HOGENOM" id="CLU_481412_0_0_1"/>
<dbReference type="InParanoid" id="Q96ME7"/>
<dbReference type="OMA" id="SVEEQWY"/>
<dbReference type="OrthoDB" id="9949647at2759"/>
<dbReference type="PAN-GO" id="Q96ME7">
    <property type="GO annotations" value="0 GO annotations based on evolutionary models"/>
</dbReference>
<dbReference type="PhylomeDB" id="Q96ME7"/>
<dbReference type="TreeFam" id="TF331185"/>
<dbReference type="PathwayCommons" id="Q96ME7"/>
<dbReference type="SignaLink" id="Q96ME7"/>
<dbReference type="BioGRID-ORCS" id="84450">
    <property type="hits" value="7 hits in 1161 CRISPR screens"/>
</dbReference>
<dbReference type="ChiTaRS" id="ZNF512">
    <property type="organism name" value="human"/>
</dbReference>
<dbReference type="EvolutionaryTrace" id="Q96ME7"/>
<dbReference type="GenomeRNAi" id="84450"/>
<dbReference type="Pharos" id="Q96ME7">
    <property type="development level" value="Tbio"/>
</dbReference>
<dbReference type="PRO" id="PR:Q96ME7"/>
<dbReference type="Proteomes" id="UP000005640">
    <property type="component" value="Chromosome 2"/>
</dbReference>
<dbReference type="RNAct" id="Q96ME7">
    <property type="molecule type" value="protein"/>
</dbReference>
<dbReference type="Bgee" id="ENSG00000243943">
    <property type="expression patterns" value="Expressed in cortical plate and 174 other cell types or tissues"/>
</dbReference>
<dbReference type="ExpressionAtlas" id="Q96ME7">
    <property type="expression patterns" value="baseline and differential"/>
</dbReference>
<dbReference type="GO" id="GO:0005634">
    <property type="term" value="C:nucleus"/>
    <property type="evidence" value="ECO:0007669"/>
    <property type="project" value="UniProtKB-SubCell"/>
</dbReference>
<dbReference type="GO" id="GO:0003677">
    <property type="term" value="F:DNA binding"/>
    <property type="evidence" value="ECO:0007669"/>
    <property type="project" value="UniProtKB-KW"/>
</dbReference>
<dbReference type="GO" id="GO:0003700">
    <property type="term" value="F:DNA-binding transcription factor activity"/>
    <property type="evidence" value="ECO:0000303"/>
    <property type="project" value="ARUK-UCL"/>
</dbReference>
<dbReference type="GO" id="GO:0008270">
    <property type="term" value="F:zinc ion binding"/>
    <property type="evidence" value="ECO:0007669"/>
    <property type="project" value="UniProtKB-KW"/>
</dbReference>
<dbReference type="FunFam" id="3.30.160.60:FF:000177">
    <property type="entry name" value="Zinc finger protein 512"/>
    <property type="match status" value="1"/>
</dbReference>
<dbReference type="FunFam" id="3.30.160.60:FF:000270">
    <property type="entry name" value="Zinc finger protein 512"/>
    <property type="match status" value="1"/>
</dbReference>
<dbReference type="FunFam" id="3.30.160.60:FF:000580">
    <property type="entry name" value="Zinc finger protein 512"/>
    <property type="match status" value="1"/>
</dbReference>
<dbReference type="Gene3D" id="3.30.160.60">
    <property type="entry name" value="Classic Zinc Finger"/>
    <property type="match status" value="3"/>
</dbReference>
<dbReference type="InterPro" id="IPR052274">
    <property type="entry name" value="Krueppel_C2H2_Zn-finger"/>
</dbReference>
<dbReference type="InterPro" id="IPR048408">
    <property type="entry name" value="ZNF512_C2HC"/>
</dbReference>
<dbReference type="InterPro" id="IPR048403">
    <property type="entry name" value="ZNF512_znf-C2H2"/>
</dbReference>
<dbReference type="InterPro" id="IPR036236">
    <property type="entry name" value="Znf_C2H2_sf"/>
</dbReference>
<dbReference type="InterPro" id="IPR013087">
    <property type="entry name" value="Znf_C2H2_type"/>
</dbReference>
<dbReference type="PANTHER" id="PTHR22979:SF2">
    <property type="entry name" value="ZINC FINGER PROTEIN 512"/>
    <property type="match status" value="1"/>
</dbReference>
<dbReference type="PANTHER" id="PTHR22979">
    <property type="entry name" value="ZINC FINGER PROTEIN-RELATED"/>
    <property type="match status" value="1"/>
</dbReference>
<dbReference type="Pfam" id="PF00096">
    <property type="entry name" value="zf-C2H2"/>
    <property type="match status" value="1"/>
</dbReference>
<dbReference type="Pfam" id="PF21276">
    <property type="entry name" value="ZNF512_C2HC"/>
    <property type="match status" value="2"/>
</dbReference>
<dbReference type="Pfam" id="PF21367">
    <property type="entry name" value="ZNF512_zf-C2H2"/>
    <property type="match status" value="1"/>
</dbReference>
<dbReference type="SMART" id="SM00355">
    <property type="entry name" value="ZnF_C2H2"/>
    <property type="match status" value="4"/>
</dbReference>
<dbReference type="SUPFAM" id="SSF57667">
    <property type="entry name" value="beta-beta-alpha zinc fingers"/>
    <property type="match status" value="5"/>
</dbReference>
<dbReference type="PROSITE" id="PS00028">
    <property type="entry name" value="ZINC_FINGER_C2H2_1"/>
    <property type="match status" value="3"/>
</dbReference>
<dbReference type="PROSITE" id="PS50157">
    <property type="entry name" value="ZINC_FINGER_C2H2_2"/>
    <property type="match status" value="2"/>
</dbReference>